<keyword id="KW-0963">Cytoplasm</keyword>
<keyword id="KW-0238">DNA-binding</keyword>
<keyword id="KW-0520">NAD</keyword>
<keyword id="KW-0678">Repressor</keyword>
<keyword id="KW-0804">Transcription</keyword>
<keyword id="KW-0805">Transcription regulation</keyword>
<dbReference type="EMBL" id="CP001407">
    <property type="protein sequence ID" value="ACO26954.1"/>
    <property type="molecule type" value="Genomic_DNA"/>
</dbReference>
<dbReference type="RefSeq" id="WP_000437706.1">
    <property type="nucleotide sequence ID" value="NZ_CP009318.1"/>
</dbReference>
<dbReference type="SMR" id="C1EUA7"/>
<dbReference type="KEGG" id="bcx:BCA_0316"/>
<dbReference type="PATRIC" id="fig|572264.18.peg.324"/>
<dbReference type="Proteomes" id="UP000002210">
    <property type="component" value="Chromosome"/>
</dbReference>
<dbReference type="GO" id="GO:0005737">
    <property type="term" value="C:cytoplasm"/>
    <property type="evidence" value="ECO:0007669"/>
    <property type="project" value="UniProtKB-SubCell"/>
</dbReference>
<dbReference type="GO" id="GO:0003677">
    <property type="term" value="F:DNA binding"/>
    <property type="evidence" value="ECO:0007669"/>
    <property type="project" value="UniProtKB-UniRule"/>
</dbReference>
<dbReference type="GO" id="GO:0003700">
    <property type="term" value="F:DNA-binding transcription factor activity"/>
    <property type="evidence" value="ECO:0007669"/>
    <property type="project" value="UniProtKB-UniRule"/>
</dbReference>
<dbReference type="GO" id="GO:0045892">
    <property type="term" value="P:negative regulation of DNA-templated transcription"/>
    <property type="evidence" value="ECO:0007669"/>
    <property type="project" value="InterPro"/>
</dbReference>
<dbReference type="GO" id="GO:0051775">
    <property type="term" value="P:response to redox state"/>
    <property type="evidence" value="ECO:0007669"/>
    <property type="project" value="InterPro"/>
</dbReference>
<dbReference type="Gene3D" id="3.40.50.720">
    <property type="entry name" value="NAD(P)-binding Rossmann-like Domain"/>
    <property type="match status" value="1"/>
</dbReference>
<dbReference type="Gene3D" id="1.10.10.10">
    <property type="entry name" value="Winged helix-like DNA-binding domain superfamily/Winged helix DNA-binding domain"/>
    <property type="match status" value="1"/>
</dbReference>
<dbReference type="HAMAP" id="MF_01131">
    <property type="entry name" value="Rex"/>
    <property type="match status" value="1"/>
</dbReference>
<dbReference type="InterPro" id="IPR003781">
    <property type="entry name" value="CoA-bd"/>
</dbReference>
<dbReference type="InterPro" id="IPR036291">
    <property type="entry name" value="NAD(P)-bd_dom_sf"/>
</dbReference>
<dbReference type="InterPro" id="IPR009718">
    <property type="entry name" value="Rex_DNA-bd_C_dom"/>
</dbReference>
<dbReference type="InterPro" id="IPR022876">
    <property type="entry name" value="Tscrpt_rep_Rex"/>
</dbReference>
<dbReference type="InterPro" id="IPR036388">
    <property type="entry name" value="WH-like_DNA-bd_sf"/>
</dbReference>
<dbReference type="InterPro" id="IPR036390">
    <property type="entry name" value="WH_DNA-bd_sf"/>
</dbReference>
<dbReference type="NCBIfam" id="NF003989">
    <property type="entry name" value="PRK05472.1-3"/>
    <property type="match status" value="1"/>
</dbReference>
<dbReference type="NCBIfam" id="NF003991">
    <property type="entry name" value="PRK05472.1-5"/>
    <property type="match status" value="1"/>
</dbReference>
<dbReference type="NCBIfam" id="NF003994">
    <property type="entry name" value="PRK05472.2-3"/>
    <property type="match status" value="1"/>
</dbReference>
<dbReference type="NCBIfam" id="NF003995">
    <property type="entry name" value="PRK05472.2-4"/>
    <property type="match status" value="1"/>
</dbReference>
<dbReference type="NCBIfam" id="NF003996">
    <property type="entry name" value="PRK05472.2-5"/>
    <property type="match status" value="1"/>
</dbReference>
<dbReference type="PANTHER" id="PTHR35786">
    <property type="entry name" value="REDOX-SENSING TRANSCRIPTIONAL REPRESSOR REX"/>
    <property type="match status" value="1"/>
</dbReference>
<dbReference type="PANTHER" id="PTHR35786:SF1">
    <property type="entry name" value="REDOX-SENSING TRANSCRIPTIONAL REPRESSOR REX 1"/>
    <property type="match status" value="1"/>
</dbReference>
<dbReference type="Pfam" id="PF02629">
    <property type="entry name" value="CoA_binding"/>
    <property type="match status" value="1"/>
</dbReference>
<dbReference type="Pfam" id="PF06971">
    <property type="entry name" value="Put_DNA-bind_N"/>
    <property type="match status" value="1"/>
</dbReference>
<dbReference type="SMART" id="SM00881">
    <property type="entry name" value="CoA_binding"/>
    <property type="match status" value="1"/>
</dbReference>
<dbReference type="SUPFAM" id="SSF51735">
    <property type="entry name" value="NAD(P)-binding Rossmann-fold domains"/>
    <property type="match status" value="1"/>
</dbReference>
<dbReference type="SUPFAM" id="SSF46785">
    <property type="entry name" value="Winged helix' DNA-binding domain"/>
    <property type="match status" value="1"/>
</dbReference>
<reference key="1">
    <citation type="submission" date="2009-02" db="EMBL/GenBank/DDBJ databases">
        <title>Genome sequence of Bacillus cereus 03BB102.</title>
        <authorList>
            <person name="Dodson R.J."/>
            <person name="Jackson P."/>
            <person name="Munk A.C."/>
            <person name="Brettin T."/>
            <person name="Bruce D."/>
            <person name="Detter C."/>
            <person name="Tapia R."/>
            <person name="Han C."/>
            <person name="Sutton G."/>
            <person name="Sims D."/>
        </authorList>
    </citation>
    <scope>NUCLEOTIDE SEQUENCE [LARGE SCALE GENOMIC DNA]</scope>
    <source>
        <strain>03BB102</strain>
    </source>
</reference>
<feature type="chain" id="PRO_1000164077" description="Redox-sensing transcriptional repressor Rex">
    <location>
        <begin position="1"/>
        <end position="209"/>
    </location>
</feature>
<feature type="DNA-binding region" description="H-T-H motif" evidence="1">
    <location>
        <begin position="16"/>
        <end position="55"/>
    </location>
</feature>
<feature type="binding site" evidence="1">
    <location>
        <begin position="90"/>
        <end position="95"/>
    </location>
    <ligand>
        <name>NAD(+)</name>
        <dbReference type="ChEBI" id="CHEBI:57540"/>
    </ligand>
</feature>
<evidence type="ECO:0000255" key="1">
    <source>
        <dbReference type="HAMAP-Rule" id="MF_01131"/>
    </source>
</evidence>
<comment type="function">
    <text evidence="1">Modulates transcription in response to changes in cellular NADH/NAD(+) redox state.</text>
</comment>
<comment type="subunit">
    <text evidence="1">Homodimer.</text>
</comment>
<comment type="subcellular location">
    <subcellularLocation>
        <location evidence="1">Cytoplasm</location>
    </subcellularLocation>
</comment>
<comment type="similarity">
    <text evidence="1">Belongs to the transcriptional regulatory Rex family.</text>
</comment>
<accession>C1EUA7</accession>
<sequence>MEQQKIPQATAKRLPLYYRFIQNLSLSGKQRVSSAELSEAVKVDSATIRRDFSYFGALGKKGYGYNVNYLLSFFRETLDQDDITRVALIGVGNLGTAFLHYNFTKNNNTKIEMAFDVSEEKVGTEIGGIPVYHLDELEERLSTDIQVAILTVPATVAQSVADRLAETNVHGILNFTPARLNVSESIRIHHIDLAVELQTLVYFLKNYPQ</sequence>
<proteinExistence type="inferred from homology"/>
<protein>
    <recommendedName>
        <fullName evidence="1">Redox-sensing transcriptional repressor Rex</fullName>
    </recommendedName>
</protein>
<organism>
    <name type="scientific">Bacillus cereus (strain 03BB102)</name>
    <dbReference type="NCBI Taxonomy" id="572264"/>
    <lineage>
        <taxon>Bacteria</taxon>
        <taxon>Bacillati</taxon>
        <taxon>Bacillota</taxon>
        <taxon>Bacilli</taxon>
        <taxon>Bacillales</taxon>
        <taxon>Bacillaceae</taxon>
        <taxon>Bacillus</taxon>
        <taxon>Bacillus cereus group</taxon>
    </lineage>
</organism>
<name>REX_BACC3</name>
<gene>
    <name evidence="1" type="primary">rex</name>
    <name type="ordered locus">BCA_0316</name>
</gene>